<organism>
    <name type="scientific">Salmonella typhimurium (strain LT2 / SGSC1412 / ATCC 700720)</name>
    <dbReference type="NCBI Taxonomy" id="99287"/>
    <lineage>
        <taxon>Bacteria</taxon>
        <taxon>Pseudomonadati</taxon>
        <taxon>Pseudomonadota</taxon>
        <taxon>Gammaproteobacteria</taxon>
        <taxon>Enterobacterales</taxon>
        <taxon>Enterobacteriaceae</taxon>
        <taxon>Salmonella</taxon>
    </lineage>
</organism>
<accession>Q8ZR03</accession>
<protein>
    <recommendedName>
        <fullName evidence="1">Octanoyltransferase</fullName>
        <ecNumber evidence="1">2.3.1.181</ecNumber>
    </recommendedName>
    <alternativeName>
        <fullName evidence="1">Lipoate-protein ligase B</fullName>
    </alternativeName>
    <alternativeName>
        <fullName evidence="1">Lipoyl/octanoyl transferase</fullName>
    </alternativeName>
    <alternativeName>
        <fullName evidence="1">Octanoyl-[acyl-carrier-protein]-protein N-octanoyltransferase</fullName>
    </alternativeName>
</protein>
<sequence>MYQDKILVRQLGLQPYEAISQAMHNFTDMRDENSHDEIWLVEHYPVFTQGQAGKAEHILMPGDIPVVQSDRGGQVTYHGPGQQVMYVLLNLKRRKLGVRDLVTLLEQTVVNTLAEIGIEAHPRADAPGVYVGEKKICSLGLRIRRGCSFHGLALNVNMDLSPFLRINPCGYAGMEMAKITQWKEDATTDNIAPRLLANILALLNNPPYEYIAA</sequence>
<keyword id="KW-0012">Acyltransferase</keyword>
<keyword id="KW-0963">Cytoplasm</keyword>
<keyword id="KW-1185">Reference proteome</keyword>
<keyword id="KW-0808">Transferase</keyword>
<name>LIPB_SALTY</name>
<feature type="chain" id="PRO_0000062877" description="Octanoyltransferase">
    <location>
        <begin position="1"/>
        <end position="213"/>
    </location>
</feature>
<feature type="domain" description="BPL/LPL catalytic" evidence="2">
    <location>
        <begin position="32"/>
        <end position="207"/>
    </location>
</feature>
<feature type="active site" description="Acyl-thioester intermediate" evidence="1">
    <location>
        <position position="169"/>
    </location>
</feature>
<feature type="binding site" evidence="1">
    <location>
        <begin position="71"/>
        <end position="78"/>
    </location>
    <ligand>
        <name>substrate</name>
    </ligand>
</feature>
<feature type="binding site" evidence="1">
    <location>
        <begin position="138"/>
        <end position="140"/>
    </location>
    <ligand>
        <name>substrate</name>
    </ligand>
</feature>
<feature type="binding site" evidence="1">
    <location>
        <begin position="151"/>
        <end position="153"/>
    </location>
    <ligand>
        <name>substrate</name>
    </ligand>
</feature>
<feature type="site" description="Lowers pKa of active site Cys" evidence="1">
    <location>
        <position position="135"/>
    </location>
</feature>
<comment type="function">
    <text evidence="1">Catalyzes the transfer of endogenously produced octanoic acid from octanoyl-acyl-carrier-protein onto the lipoyl domains of lipoate-dependent enzymes. Lipoyl-ACP can also act as a substrate although octanoyl-ACP is likely to be the physiological substrate.</text>
</comment>
<comment type="catalytic activity">
    <reaction evidence="1">
        <text>octanoyl-[ACP] + L-lysyl-[protein] = N(6)-octanoyl-L-lysyl-[protein] + holo-[ACP] + H(+)</text>
        <dbReference type="Rhea" id="RHEA:17665"/>
        <dbReference type="Rhea" id="RHEA-COMP:9636"/>
        <dbReference type="Rhea" id="RHEA-COMP:9685"/>
        <dbReference type="Rhea" id="RHEA-COMP:9752"/>
        <dbReference type="Rhea" id="RHEA-COMP:9928"/>
        <dbReference type="ChEBI" id="CHEBI:15378"/>
        <dbReference type="ChEBI" id="CHEBI:29969"/>
        <dbReference type="ChEBI" id="CHEBI:64479"/>
        <dbReference type="ChEBI" id="CHEBI:78463"/>
        <dbReference type="ChEBI" id="CHEBI:78809"/>
        <dbReference type="EC" id="2.3.1.181"/>
    </reaction>
</comment>
<comment type="pathway">
    <text evidence="1">Protein modification; protein lipoylation via endogenous pathway; protein N(6)-(lipoyl)lysine from octanoyl-[acyl-carrier-protein]: step 1/2.</text>
</comment>
<comment type="subcellular location">
    <subcellularLocation>
        <location evidence="1">Cytoplasm</location>
    </subcellularLocation>
</comment>
<comment type="miscellaneous">
    <text evidence="1">In the reaction, the free carboxyl group of octanoic acid is attached via an amide linkage to the epsilon-amino group of a specific lysine residue of lipoyl domains of lipoate-dependent enzymes.</text>
</comment>
<comment type="similarity">
    <text evidence="1">Belongs to the LipB family.</text>
</comment>
<comment type="sequence caution" evidence="3">
    <conflict type="erroneous initiation">
        <sequence resource="EMBL-CDS" id="AAL19586"/>
    </conflict>
    <text>Truncated N-terminus.</text>
</comment>
<gene>
    <name evidence="1" type="primary">lipB</name>
    <name type="ordered locus">STM0635</name>
</gene>
<evidence type="ECO:0000255" key="1">
    <source>
        <dbReference type="HAMAP-Rule" id="MF_00013"/>
    </source>
</evidence>
<evidence type="ECO:0000255" key="2">
    <source>
        <dbReference type="PROSITE-ProRule" id="PRU01067"/>
    </source>
</evidence>
<evidence type="ECO:0000305" key="3"/>
<proteinExistence type="inferred from homology"/>
<dbReference type="EC" id="2.3.1.181" evidence="1"/>
<dbReference type="EMBL" id="AE006468">
    <property type="protein sequence ID" value="AAL19586.1"/>
    <property type="status" value="ALT_INIT"/>
    <property type="molecule type" value="Genomic_DNA"/>
</dbReference>
<dbReference type="RefSeq" id="NP_459627.3">
    <property type="nucleotide sequence ID" value="NC_003197.2"/>
</dbReference>
<dbReference type="RefSeq" id="WP_001539438.1">
    <property type="nucleotide sequence ID" value="NC_003197.2"/>
</dbReference>
<dbReference type="SMR" id="Q8ZR03"/>
<dbReference type="STRING" id="99287.STM0635"/>
<dbReference type="PaxDb" id="99287-STM0635"/>
<dbReference type="DNASU" id="1252155"/>
<dbReference type="GeneID" id="1252155"/>
<dbReference type="KEGG" id="stm:STM0635"/>
<dbReference type="PATRIC" id="fig|99287.12.peg.669"/>
<dbReference type="HOGENOM" id="CLU_035168_3_1_6"/>
<dbReference type="OMA" id="GEVTYHC"/>
<dbReference type="PhylomeDB" id="Q8ZR03"/>
<dbReference type="UniPathway" id="UPA00538">
    <property type="reaction ID" value="UER00592"/>
</dbReference>
<dbReference type="Proteomes" id="UP000001014">
    <property type="component" value="Chromosome"/>
</dbReference>
<dbReference type="GO" id="GO:0005737">
    <property type="term" value="C:cytoplasm"/>
    <property type="evidence" value="ECO:0007669"/>
    <property type="project" value="UniProtKB-SubCell"/>
</dbReference>
<dbReference type="GO" id="GO:0033819">
    <property type="term" value="F:lipoyl(octanoyl) transferase activity"/>
    <property type="evidence" value="ECO:0000318"/>
    <property type="project" value="GO_Central"/>
</dbReference>
<dbReference type="GO" id="GO:0036211">
    <property type="term" value="P:protein modification process"/>
    <property type="evidence" value="ECO:0007669"/>
    <property type="project" value="InterPro"/>
</dbReference>
<dbReference type="CDD" id="cd16444">
    <property type="entry name" value="LipB"/>
    <property type="match status" value="1"/>
</dbReference>
<dbReference type="FunFam" id="3.30.930.10:FF:000020">
    <property type="entry name" value="Octanoyltransferase"/>
    <property type="match status" value="1"/>
</dbReference>
<dbReference type="Gene3D" id="3.30.930.10">
    <property type="entry name" value="Bira Bifunctional Protein, Domain 2"/>
    <property type="match status" value="1"/>
</dbReference>
<dbReference type="HAMAP" id="MF_00013">
    <property type="entry name" value="LipB"/>
    <property type="match status" value="1"/>
</dbReference>
<dbReference type="InterPro" id="IPR045864">
    <property type="entry name" value="aa-tRNA-synth_II/BPL/LPL"/>
</dbReference>
<dbReference type="InterPro" id="IPR004143">
    <property type="entry name" value="BPL_LPL_catalytic"/>
</dbReference>
<dbReference type="InterPro" id="IPR000544">
    <property type="entry name" value="Octanoyltransferase"/>
</dbReference>
<dbReference type="InterPro" id="IPR020605">
    <property type="entry name" value="Octanoyltransferase_CS"/>
</dbReference>
<dbReference type="NCBIfam" id="TIGR00214">
    <property type="entry name" value="lipB"/>
    <property type="match status" value="1"/>
</dbReference>
<dbReference type="NCBIfam" id="NF010922">
    <property type="entry name" value="PRK14342.1"/>
    <property type="match status" value="1"/>
</dbReference>
<dbReference type="PANTHER" id="PTHR10993:SF7">
    <property type="entry name" value="LIPOYLTRANSFERASE 2, MITOCHONDRIAL-RELATED"/>
    <property type="match status" value="1"/>
</dbReference>
<dbReference type="PANTHER" id="PTHR10993">
    <property type="entry name" value="OCTANOYLTRANSFERASE"/>
    <property type="match status" value="1"/>
</dbReference>
<dbReference type="Pfam" id="PF21948">
    <property type="entry name" value="LplA-B_cat"/>
    <property type="match status" value="1"/>
</dbReference>
<dbReference type="PIRSF" id="PIRSF016262">
    <property type="entry name" value="LPLase"/>
    <property type="match status" value="1"/>
</dbReference>
<dbReference type="SUPFAM" id="SSF55681">
    <property type="entry name" value="Class II aaRS and biotin synthetases"/>
    <property type="match status" value="1"/>
</dbReference>
<dbReference type="PROSITE" id="PS51733">
    <property type="entry name" value="BPL_LPL_CATALYTIC"/>
    <property type="match status" value="1"/>
</dbReference>
<dbReference type="PROSITE" id="PS01313">
    <property type="entry name" value="LIPB"/>
    <property type="match status" value="1"/>
</dbReference>
<reference key="1">
    <citation type="journal article" date="2001" name="Nature">
        <title>Complete genome sequence of Salmonella enterica serovar Typhimurium LT2.</title>
        <authorList>
            <person name="McClelland M."/>
            <person name="Sanderson K.E."/>
            <person name="Spieth J."/>
            <person name="Clifton S.W."/>
            <person name="Latreille P."/>
            <person name="Courtney L."/>
            <person name="Porwollik S."/>
            <person name="Ali J."/>
            <person name="Dante M."/>
            <person name="Du F."/>
            <person name="Hou S."/>
            <person name="Layman D."/>
            <person name="Leonard S."/>
            <person name="Nguyen C."/>
            <person name="Scott K."/>
            <person name="Holmes A."/>
            <person name="Grewal N."/>
            <person name="Mulvaney E."/>
            <person name="Ryan E."/>
            <person name="Sun H."/>
            <person name="Florea L."/>
            <person name="Miller W."/>
            <person name="Stoneking T."/>
            <person name="Nhan M."/>
            <person name="Waterston R."/>
            <person name="Wilson R.K."/>
        </authorList>
    </citation>
    <scope>NUCLEOTIDE SEQUENCE [LARGE SCALE GENOMIC DNA]</scope>
    <source>
        <strain>LT2 / SGSC1412 / ATCC 700720</strain>
    </source>
</reference>